<keyword id="KW-0963">Cytoplasm</keyword>
<keyword id="KW-0275">Fatty acid biosynthesis</keyword>
<keyword id="KW-0276">Fatty acid metabolism</keyword>
<keyword id="KW-0444">Lipid biosynthesis</keyword>
<keyword id="KW-0443">Lipid metabolism</keyword>
<keyword id="KW-0596">Phosphopantetheine</keyword>
<keyword id="KW-0597">Phosphoprotein</keyword>
<comment type="function">
    <text evidence="1">Carrier of the growing fatty acid chain in fatty acid biosynthesis.</text>
</comment>
<comment type="pathway">
    <text evidence="1">Lipid metabolism; fatty acid biosynthesis.</text>
</comment>
<comment type="subcellular location">
    <subcellularLocation>
        <location evidence="1">Cytoplasm</location>
    </subcellularLocation>
</comment>
<comment type="PTM">
    <text evidence="1">4'-phosphopantetheine is transferred from CoA to a specific serine of apo-ACP by AcpS. This modification is essential for activity because fatty acids are bound in thioester linkage to the sulfhydryl of the prosthetic group.</text>
</comment>
<comment type="similarity">
    <text evidence="1">Belongs to the acyl carrier protein (ACP) family.</text>
</comment>
<name>ACP_SULSY</name>
<feature type="chain" id="PRO_1000139069" description="Acyl carrier protein">
    <location>
        <begin position="1"/>
        <end position="77"/>
    </location>
</feature>
<feature type="domain" description="Carrier" evidence="2">
    <location>
        <begin position="1"/>
        <end position="76"/>
    </location>
</feature>
<feature type="modified residue" description="O-(pantetheine 4'-phosphoryl)serine" evidence="2">
    <location>
        <position position="36"/>
    </location>
</feature>
<evidence type="ECO:0000255" key="1">
    <source>
        <dbReference type="HAMAP-Rule" id="MF_01217"/>
    </source>
</evidence>
<evidence type="ECO:0000255" key="2">
    <source>
        <dbReference type="PROSITE-ProRule" id="PRU00258"/>
    </source>
</evidence>
<sequence>MSVEQRVKEIIADQLGVEMEKITPEARFVDDLGADSLDVVELIMAFEEEFGVEIPDEDAEKIATVKDVLDYIKSKQG</sequence>
<organism>
    <name type="scientific">Sulfurihydrogenibium sp. (strain YO3AOP1)</name>
    <dbReference type="NCBI Taxonomy" id="436114"/>
    <lineage>
        <taxon>Bacteria</taxon>
        <taxon>Pseudomonadati</taxon>
        <taxon>Aquificota</taxon>
        <taxon>Aquificia</taxon>
        <taxon>Aquificales</taxon>
        <taxon>Hydrogenothermaceae</taxon>
        <taxon>Sulfurihydrogenibium</taxon>
    </lineage>
</organism>
<dbReference type="EMBL" id="CP001080">
    <property type="protein sequence ID" value="ACD67270.1"/>
    <property type="molecule type" value="Genomic_DNA"/>
</dbReference>
<dbReference type="RefSeq" id="WP_012460326.1">
    <property type="nucleotide sequence ID" value="NC_010730.1"/>
</dbReference>
<dbReference type="SMR" id="B2V6T8"/>
<dbReference type="STRING" id="436114.SYO3AOP1_1672"/>
<dbReference type="KEGG" id="sul:SYO3AOP1_1672"/>
<dbReference type="eggNOG" id="COG0236">
    <property type="taxonomic scope" value="Bacteria"/>
</dbReference>
<dbReference type="HOGENOM" id="CLU_108696_5_1_0"/>
<dbReference type="UniPathway" id="UPA00094"/>
<dbReference type="GO" id="GO:0005829">
    <property type="term" value="C:cytosol"/>
    <property type="evidence" value="ECO:0007669"/>
    <property type="project" value="TreeGrafter"/>
</dbReference>
<dbReference type="GO" id="GO:0016020">
    <property type="term" value="C:membrane"/>
    <property type="evidence" value="ECO:0007669"/>
    <property type="project" value="GOC"/>
</dbReference>
<dbReference type="GO" id="GO:0000035">
    <property type="term" value="F:acyl binding"/>
    <property type="evidence" value="ECO:0007669"/>
    <property type="project" value="TreeGrafter"/>
</dbReference>
<dbReference type="GO" id="GO:0000036">
    <property type="term" value="F:acyl carrier activity"/>
    <property type="evidence" value="ECO:0007669"/>
    <property type="project" value="UniProtKB-UniRule"/>
</dbReference>
<dbReference type="GO" id="GO:0031177">
    <property type="term" value="F:phosphopantetheine binding"/>
    <property type="evidence" value="ECO:0007669"/>
    <property type="project" value="InterPro"/>
</dbReference>
<dbReference type="GO" id="GO:0009245">
    <property type="term" value="P:lipid A biosynthetic process"/>
    <property type="evidence" value="ECO:0007669"/>
    <property type="project" value="TreeGrafter"/>
</dbReference>
<dbReference type="FunFam" id="1.10.1200.10:FF:000001">
    <property type="entry name" value="Acyl carrier protein"/>
    <property type="match status" value="1"/>
</dbReference>
<dbReference type="Gene3D" id="1.10.1200.10">
    <property type="entry name" value="ACP-like"/>
    <property type="match status" value="1"/>
</dbReference>
<dbReference type="HAMAP" id="MF_01217">
    <property type="entry name" value="Acyl_carrier"/>
    <property type="match status" value="1"/>
</dbReference>
<dbReference type="InterPro" id="IPR003231">
    <property type="entry name" value="ACP"/>
</dbReference>
<dbReference type="InterPro" id="IPR036736">
    <property type="entry name" value="ACP-like_sf"/>
</dbReference>
<dbReference type="InterPro" id="IPR020806">
    <property type="entry name" value="PKS_PP-bd"/>
</dbReference>
<dbReference type="InterPro" id="IPR009081">
    <property type="entry name" value="PP-bd_ACP"/>
</dbReference>
<dbReference type="InterPro" id="IPR006162">
    <property type="entry name" value="Ppantetheine_attach_site"/>
</dbReference>
<dbReference type="NCBIfam" id="TIGR00517">
    <property type="entry name" value="acyl_carrier"/>
    <property type="match status" value="1"/>
</dbReference>
<dbReference type="NCBIfam" id="NF002148">
    <property type="entry name" value="PRK00982.1-2"/>
    <property type="match status" value="1"/>
</dbReference>
<dbReference type="NCBIfam" id="NF002149">
    <property type="entry name" value="PRK00982.1-3"/>
    <property type="match status" value="1"/>
</dbReference>
<dbReference type="NCBIfam" id="NF002150">
    <property type="entry name" value="PRK00982.1-4"/>
    <property type="match status" value="1"/>
</dbReference>
<dbReference type="NCBIfam" id="NF002151">
    <property type="entry name" value="PRK00982.1-5"/>
    <property type="match status" value="1"/>
</dbReference>
<dbReference type="PANTHER" id="PTHR20863">
    <property type="entry name" value="ACYL CARRIER PROTEIN"/>
    <property type="match status" value="1"/>
</dbReference>
<dbReference type="PANTHER" id="PTHR20863:SF76">
    <property type="entry name" value="CARRIER DOMAIN-CONTAINING PROTEIN"/>
    <property type="match status" value="1"/>
</dbReference>
<dbReference type="Pfam" id="PF00550">
    <property type="entry name" value="PP-binding"/>
    <property type="match status" value="1"/>
</dbReference>
<dbReference type="SMART" id="SM00823">
    <property type="entry name" value="PKS_PP"/>
    <property type="match status" value="1"/>
</dbReference>
<dbReference type="SUPFAM" id="SSF47336">
    <property type="entry name" value="ACP-like"/>
    <property type="match status" value="1"/>
</dbReference>
<dbReference type="PROSITE" id="PS50075">
    <property type="entry name" value="CARRIER"/>
    <property type="match status" value="1"/>
</dbReference>
<dbReference type="PROSITE" id="PS00012">
    <property type="entry name" value="PHOSPHOPANTETHEINE"/>
    <property type="match status" value="1"/>
</dbReference>
<protein>
    <recommendedName>
        <fullName evidence="1">Acyl carrier protein</fullName>
        <shortName evidence="1">ACP</shortName>
    </recommendedName>
</protein>
<accession>B2V6T8</accession>
<gene>
    <name evidence="1" type="primary">acpP</name>
    <name type="ordered locus">SYO3AOP1_1672</name>
</gene>
<proteinExistence type="inferred from homology"/>
<reference key="1">
    <citation type="journal article" date="2009" name="J. Bacteriol.">
        <title>Complete and draft genome sequences of six members of the Aquificales.</title>
        <authorList>
            <person name="Reysenbach A.-L."/>
            <person name="Hamamura N."/>
            <person name="Podar M."/>
            <person name="Griffiths E."/>
            <person name="Ferreira S."/>
            <person name="Hochstein R."/>
            <person name="Heidelberg J."/>
            <person name="Johnson J."/>
            <person name="Mead D."/>
            <person name="Pohorille A."/>
            <person name="Sarmiento M."/>
            <person name="Schweighofer K."/>
            <person name="Seshadri R."/>
            <person name="Voytek M.A."/>
        </authorList>
    </citation>
    <scope>NUCLEOTIDE SEQUENCE [LARGE SCALE GENOMIC DNA]</scope>
    <source>
        <strain>YO3AOP1</strain>
    </source>
</reference>